<proteinExistence type="inferred from homology"/>
<sequence length="556" mass="61599">MPVVEVKLWDLERLTGASLDESTVRDLLPRLKCEVEEVSGEDVVYEATHDRPDLYSAELLSVYLKGLLGVEDGLPRPRVGSAEGVAEVEGPAYRPYAFFAVVRGVSLDDEAIRQLMQLQEKVHLTYGRNRRKVSIGLYDLDGIKLPVRYVAASPETRMKPLGFAIEMTLREVLEKHPKGVEYGHLVKGHGEYPLIVDAEGKVVSFPPITNSEDFRVTESTRDVLIDVTSTDPEAGRRIISLFAHAVAVRGGEVRPLRLKGALDEESPRMEPEEVVYDVSMNRDLLGLDLGVEETVRLLRAMRMDAEPAGNGKVAVRYPYFRVDILHPVDIAEEVAMGYGYERIEPAVIPPLHPGREDPIEVFTRALREGMVGLGFVEVNNYMMTSASLMFDAMLLPRQPIVEVENPRHEAYHALRTWIVPQLLRLMSSSKHAGYPQRVFEAGDVAIPDESRDNRVREERRLAFAVAGKGVTLTDGLAALKGLFRQLGVSFKLEKAEHPSFIAGRVARVVTEAGDAGIVGEVHPQVLVNFGLEVPVVAGELNVEVVMKCYLARLGGA</sequence>
<gene>
    <name evidence="1" type="primary">pheT</name>
    <name type="ordered locus">Tpen_0951</name>
</gene>
<name>SYFB_THEPD</name>
<accession>A1RYS1</accession>
<keyword id="KW-0030">Aminoacyl-tRNA synthetase</keyword>
<keyword id="KW-0067">ATP-binding</keyword>
<keyword id="KW-0963">Cytoplasm</keyword>
<keyword id="KW-0436">Ligase</keyword>
<keyword id="KW-0460">Magnesium</keyword>
<keyword id="KW-0479">Metal-binding</keyword>
<keyword id="KW-0547">Nucleotide-binding</keyword>
<keyword id="KW-0648">Protein biosynthesis</keyword>
<keyword id="KW-1185">Reference proteome</keyword>
<evidence type="ECO:0000255" key="1">
    <source>
        <dbReference type="HAMAP-Rule" id="MF_00284"/>
    </source>
</evidence>
<reference key="1">
    <citation type="journal article" date="2008" name="J. Bacteriol.">
        <title>Genome sequence of Thermofilum pendens reveals an exceptional loss of biosynthetic pathways without genome reduction.</title>
        <authorList>
            <person name="Anderson I."/>
            <person name="Rodriguez J."/>
            <person name="Susanti D."/>
            <person name="Porat I."/>
            <person name="Reich C."/>
            <person name="Ulrich L.E."/>
            <person name="Elkins J.G."/>
            <person name="Mavromatis K."/>
            <person name="Lykidis A."/>
            <person name="Kim E."/>
            <person name="Thompson L.S."/>
            <person name="Nolan M."/>
            <person name="Land M."/>
            <person name="Copeland A."/>
            <person name="Lapidus A."/>
            <person name="Lucas S."/>
            <person name="Detter C."/>
            <person name="Zhulin I.B."/>
            <person name="Olsen G.J."/>
            <person name="Whitman W."/>
            <person name="Mukhopadhyay B."/>
            <person name="Bristow J."/>
            <person name="Kyrpides N."/>
        </authorList>
    </citation>
    <scope>NUCLEOTIDE SEQUENCE [LARGE SCALE GENOMIC DNA]</scope>
    <source>
        <strain>DSM 2475 / Hrk 5</strain>
    </source>
</reference>
<feature type="chain" id="PRO_1000022430" description="Phenylalanine--tRNA ligase beta subunit">
    <location>
        <begin position="1"/>
        <end position="556"/>
    </location>
</feature>
<feature type="domain" description="B5" evidence="1">
    <location>
        <begin position="269"/>
        <end position="345"/>
    </location>
</feature>
<feature type="binding site" evidence="1">
    <location>
        <position position="323"/>
    </location>
    <ligand>
        <name>Mg(2+)</name>
        <dbReference type="ChEBI" id="CHEBI:18420"/>
        <note>shared with alpha subunit</note>
    </ligand>
</feature>
<feature type="binding site" evidence="1">
    <location>
        <position position="329"/>
    </location>
    <ligand>
        <name>Mg(2+)</name>
        <dbReference type="ChEBI" id="CHEBI:18420"/>
        <note>shared with alpha subunit</note>
    </ligand>
</feature>
<feature type="binding site" evidence="1">
    <location>
        <position position="332"/>
    </location>
    <ligand>
        <name>Mg(2+)</name>
        <dbReference type="ChEBI" id="CHEBI:18420"/>
        <note>shared with alpha subunit</note>
    </ligand>
</feature>
<feature type="binding site" evidence="1">
    <location>
        <position position="333"/>
    </location>
    <ligand>
        <name>Mg(2+)</name>
        <dbReference type="ChEBI" id="CHEBI:18420"/>
        <note>shared with alpha subunit</note>
    </ligand>
</feature>
<dbReference type="EC" id="6.1.1.20" evidence="1"/>
<dbReference type="EMBL" id="CP000505">
    <property type="protein sequence ID" value="ABL78351.1"/>
    <property type="molecule type" value="Genomic_DNA"/>
</dbReference>
<dbReference type="RefSeq" id="WP_011752616.1">
    <property type="nucleotide sequence ID" value="NC_008698.1"/>
</dbReference>
<dbReference type="SMR" id="A1RYS1"/>
<dbReference type="STRING" id="368408.Tpen_0951"/>
<dbReference type="EnsemblBacteria" id="ABL78351">
    <property type="protein sequence ID" value="ABL78351"/>
    <property type="gene ID" value="Tpen_0951"/>
</dbReference>
<dbReference type="GeneID" id="4601291"/>
<dbReference type="KEGG" id="tpe:Tpen_0951"/>
<dbReference type="eggNOG" id="arCOG00412">
    <property type="taxonomic scope" value="Archaea"/>
</dbReference>
<dbReference type="HOGENOM" id="CLU_020279_3_0_2"/>
<dbReference type="OrthoDB" id="10073at2157"/>
<dbReference type="Proteomes" id="UP000000641">
    <property type="component" value="Chromosome"/>
</dbReference>
<dbReference type="GO" id="GO:0009328">
    <property type="term" value="C:phenylalanine-tRNA ligase complex"/>
    <property type="evidence" value="ECO:0007669"/>
    <property type="project" value="TreeGrafter"/>
</dbReference>
<dbReference type="GO" id="GO:0005524">
    <property type="term" value="F:ATP binding"/>
    <property type="evidence" value="ECO:0007669"/>
    <property type="project" value="UniProtKB-UniRule"/>
</dbReference>
<dbReference type="GO" id="GO:0000287">
    <property type="term" value="F:magnesium ion binding"/>
    <property type="evidence" value="ECO:0007669"/>
    <property type="project" value="InterPro"/>
</dbReference>
<dbReference type="GO" id="GO:0004826">
    <property type="term" value="F:phenylalanine-tRNA ligase activity"/>
    <property type="evidence" value="ECO:0007669"/>
    <property type="project" value="UniProtKB-UniRule"/>
</dbReference>
<dbReference type="GO" id="GO:0003723">
    <property type="term" value="F:RNA binding"/>
    <property type="evidence" value="ECO:0007669"/>
    <property type="project" value="InterPro"/>
</dbReference>
<dbReference type="GO" id="GO:0006432">
    <property type="term" value="P:phenylalanyl-tRNA aminoacylation"/>
    <property type="evidence" value="ECO:0007669"/>
    <property type="project" value="UniProtKB-UniRule"/>
</dbReference>
<dbReference type="CDD" id="cd00769">
    <property type="entry name" value="PheRS_beta_core"/>
    <property type="match status" value="1"/>
</dbReference>
<dbReference type="Gene3D" id="3.30.56.10">
    <property type="match status" value="2"/>
</dbReference>
<dbReference type="Gene3D" id="3.30.930.10">
    <property type="entry name" value="Bira Bifunctional Protein, Domain 2"/>
    <property type="match status" value="1"/>
</dbReference>
<dbReference type="Gene3D" id="3.50.40.10">
    <property type="entry name" value="Phenylalanyl-trna Synthetase, Chain B, domain 3"/>
    <property type="match status" value="1"/>
</dbReference>
<dbReference type="HAMAP" id="MF_00284">
    <property type="entry name" value="Phe_tRNA_synth_beta2"/>
    <property type="match status" value="1"/>
</dbReference>
<dbReference type="InterPro" id="IPR045864">
    <property type="entry name" value="aa-tRNA-synth_II/BPL/LPL"/>
</dbReference>
<dbReference type="InterPro" id="IPR005146">
    <property type="entry name" value="B3/B4_tRNA-bd"/>
</dbReference>
<dbReference type="InterPro" id="IPR009061">
    <property type="entry name" value="DNA-bd_dom_put_sf"/>
</dbReference>
<dbReference type="InterPro" id="IPR045060">
    <property type="entry name" value="Phe-tRNA-ligase_IIc_bsu"/>
</dbReference>
<dbReference type="InterPro" id="IPR004531">
    <property type="entry name" value="Phe-tRNA-synth_IIc_bsu_arc_euk"/>
</dbReference>
<dbReference type="InterPro" id="IPR020825">
    <property type="entry name" value="Phe-tRNA_synthase-like_B3/B4"/>
</dbReference>
<dbReference type="InterPro" id="IPR022918">
    <property type="entry name" value="Phe_tRNA_ligase_beta2_arc"/>
</dbReference>
<dbReference type="InterPro" id="IPR041616">
    <property type="entry name" value="PheRS_beta_core"/>
</dbReference>
<dbReference type="InterPro" id="IPR005147">
    <property type="entry name" value="tRNA_synthase_B5-dom"/>
</dbReference>
<dbReference type="NCBIfam" id="TIGR00471">
    <property type="entry name" value="pheT_arch"/>
    <property type="match status" value="1"/>
</dbReference>
<dbReference type="PANTHER" id="PTHR10947:SF0">
    <property type="entry name" value="PHENYLALANINE--TRNA LIGASE BETA SUBUNIT"/>
    <property type="match status" value="1"/>
</dbReference>
<dbReference type="PANTHER" id="PTHR10947">
    <property type="entry name" value="PHENYLALANYL-TRNA SYNTHETASE BETA CHAIN AND LEUCINE-RICH REPEAT-CONTAINING PROTEIN 47"/>
    <property type="match status" value="1"/>
</dbReference>
<dbReference type="Pfam" id="PF03483">
    <property type="entry name" value="B3_4"/>
    <property type="match status" value="1"/>
</dbReference>
<dbReference type="Pfam" id="PF03484">
    <property type="entry name" value="B5"/>
    <property type="match status" value="1"/>
</dbReference>
<dbReference type="Pfam" id="PF17759">
    <property type="entry name" value="tRNA_synthFbeta"/>
    <property type="match status" value="1"/>
</dbReference>
<dbReference type="SMART" id="SM00873">
    <property type="entry name" value="B3_4"/>
    <property type="match status" value="1"/>
</dbReference>
<dbReference type="SMART" id="SM00874">
    <property type="entry name" value="B5"/>
    <property type="match status" value="1"/>
</dbReference>
<dbReference type="SUPFAM" id="SSF55681">
    <property type="entry name" value="Class II aaRS and biotin synthetases"/>
    <property type="match status" value="1"/>
</dbReference>
<dbReference type="SUPFAM" id="SSF46955">
    <property type="entry name" value="Putative DNA-binding domain"/>
    <property type="match status" value="1"/>
</dbReference>
<dbReference type="PROSITE" id="PS51483">
    <property type="entry name" value="B5"/>
    <property type="match status" value="1"/>
</dbReference>
<comment type="catalytic activity">
    <reaction evidence="1">
        <text>tRNA(Phe) + L-phenylalanine + ATP = L-phenylalanyl-tRNA(Phe) + AMP + diphosphate + H(+)</text>
        <dbReference type="Rhea" id="RHEA:19413"/>
        <dbReference type="Rhea" id="RHEA-COMP:9668"/>
        <dbReference type="Rhea" id="RHEA-COMP:9699"/>
        <dbReference type="ChEBI" id="CHEBI:15378"/>
        <dbReference type="ChEBI" id="CHEBI:30616"/>
        <dbReference type="ChEBI" id="CHEBI:33019"/>
        <dbReference type="ChEBI" id="CHEBI:58095"/>
        <dbReference type="ChEBI" id="CHEBI:78442"/>
        <dbReference type="ChEBI" id="CHEBI:78531"/>
        <dbReference type="ChEBI" id="CHEBI:456215"/>
        <dbReference type="EC" id="6.1.1.20"/>
    </reaction>
</comment>
<comment type="cofactor">
    <cofactor evidence="1">
        <name>Mg(2+)</name>
        <dbReference type="ChEBI" id="CHEBI:18420"/>
    </cofactor>
</comment>
<comment type="subunit">
    <text evidence="1">Tetramer of two alpha and two beta subunits.</text>
</comment>
<comment type="subcellular location">
    <subcellularLocation>
        <location evidence="1">Cytoplasm</location>
    </subcellularLocation>
</comment>
<comment type="similarity">
    <text evidence="1">Belongs to the phenylalanyl-tRNA synthetase beta subunit family. Type 2 subfamily.</text>
</comment>
<organism>
    <name type="scientific">Thermofilum pendens (strain DSM 2475 / Hrk 5)</name>
    <dbReference type="NCBI Taxonomy" id="368408"/>
    <lineage>
        <taxon>Archaea</taxon>
        <taxon>Thermoproteota</taxon>
        <taxon>Thermoprotei</taxon>
        <taxon>Thermofilales</taxon>
        <taxon>Thermofilaceae</taxon>
        <taxon>Thermofilum</taxon>
    </lineage>
</organism>
<protein>
    <recommendedName>
        <fullName evidence="1">Phenylalanine--tRNA ligase beta subunit</fullName>
        <ecNumber evidence="1">6.1.1.20</ecNumber>
    </recommendedName>
    <alternativeName>
        <fullName evidence="1">Phenylalanyl-tRNA synthetase beta subunit</fullName>
        <shortName evidence="1">PheRS</shortName>
    </alternativeName>
</protein>